<proteinExistence type="inferred from homology"/>
<sequence>MAKEKIRIRLKAYDHRILDQSAEKIVETAKRSGATVSGPIPLPTEKTIYTILRAVHKYKDSREQFEMRTHKRLIDIVSPTPQTVDSLMRLDLPSGVDIEIKL</sequence>
<protein>
    <recommendedName>
        <fullName evidence="1">Small ribosomal subunit protein uS10</fullName>
    </recommendedName>
    <alternativeName>
        <fullName evidence="2">30S ribosomal protein S10</fullName>
    </alternativeName>
</protein>
<feature type="chain" id="PRO_1000127080" description="Small ribosomal subunit protein uS10">
    <location>
        <begin position="1"/>
        <end position="102"/>
    </location>
</feature>
<evidence type="ECO:0000255" key="1">
    <source>
        <dbReference type="HAMAP-Rule" id="MF_00508"/>
    </source>
</evidence>
<evidence type="ECO:0000305" key="2"/>
<keyword id="KW-0687">Ribonucleoprotein</keyword>
<keyword id="KW-0689">Ribosomal protein</keyword>
<comment type="function">
    <text evidence="1">Involved in the binding of tRNA to the ribosomes.</text>
</comment>
<comment type="subunit">
    <text evidence="1">Part of the 30S ribosomal subunit.</text>
</comment>
<comment type="similarity">
    <text evidence="1">Belongs to the universal ribosomal protein uS10 family.</text>
</comment>
<gene>
    <name evidence="1" type="primary">rpsJ</name>
    <name type="ordered locus">BcerKBAB4_0104</name>
</gene>
<accession>A9VP76</accession>
<dbReference type="EMBL" id="CP000903">
    <property type="protein sequence ID" value="ABY41373.1"/>
    <property type="molecule type" value="Genomic_DNA"/>
</dbReference>
<dbReference type="RefSeq" id="WP_001040595.1">
    <property type="nucleotide sequence ID" value="NZ_CAKMRX030000129.1"/>
</dbReference>
<dbReference type="SMR" id="A9VP76"/>
<dbReference type="GeneID" id="92887802"/>
<dbReference type="KEGG" id="bwe:BcerKBAB4_0104"/>
<dbReference type="eggNOG" id="COG0051">
    <property type="taxonomic scope" value="Bacteria"/>
</dbReference>
<dbReference type="HOGENOM" id="CLU_122625_1_3_9"/>
<dbReference type="Proteomes" id="UP000002154">
    <property type="component" value="Chromosome"/>
</dbReference>
<dbReference type="GO" id="GO:1990904">
    <property type="term" value="C:ribonucleoprotein complex"/>
    <property type="evidence" value="ECO:0007669"/>
    <property type="project" value="UniProtKB-KW"/>
</dbReference>
<dbReference type="GO" id="GO:0005840">
    <property type="term" value="C:ribosome"/>
    <property type="evidence" value="ECO:0007669"/>
    <property type="project" value="UniProtKB-KW"/>
</dbReference>
<dbReference type="GO" id="GO:0003735">
    <property type="term" value="F:structural constituent of ribosome"/>
    <property type="evidence" value="ECO:0007669"/>
    <property type="project" value="InterPro"/>
</dbReference>
<dbReference type="GO" id="GO:0000049">
    <property type="term" value="F:tRNA binding"/>
    <property type="evidence" value="ECO:0007669"/>
    <property type="project" value="UniProtKB-UniRule"/>
</dbReference>
<dbReference type="GO" id="GO:0006412">
    <property type="term" value="P:translation"/>
    <property type="evidence" value="ECO:0007669"/>
    <property type="project" value="UniProtKB-UniRule"/>
</dbReference>
<dbReference type="FunFam" id="3.30.70.600:FF:000001">
    <property type="entry name" value="30S ribosomal protein S10"/>
    <property type="match status" value="1"/>
</dbReference>
<dbReference type="Gene3D" id="3.30.70.600">
    <property type="entry name" value="Ribosomal protein S10 domain"/>
    <property type="match status" value="1"/>
</dbReference>
<dbReference type="HAMAP" id="MF_00508">
    <property type="entry name" value="Ribosomal_uS10"/>
    <property type="match status" value="1"/>
</dbReference>
<dbReference type="InterPro" id="IPR001848">
    <property type="entry name" value="Ribosomal_uS10"/>
</dbReference>
<dbReference type="InterPro" id="IPR018268">
    <property type="entry name" value="Ribosomal_uS10_CS"/>
</dbReference>
<dbReference type="InterPro" id="IPR027486">
    <property type="entry name" value="Ribosomal_uS10_dom"/>
</dbReference>
<dbReference type="InterPro" id="IPR036838">
    <property type="entry name" value="Ribosomal_uS10_dom_sf"/>
</dbReference>
<dbReference type="NCBIfam" id="NF001861">
    <property type="entry name" value="PRK00596.1"/>
    <property type="match status" value="1"/>
</dbReference>
<dbReference type="NCBIfam" id="TIGR01049">
    <property type="entry name" value="rpsJ_bact"/>
    <property type="match status" value="1"/>
</dbReference>
<dbReference type="PANTHER" id="PTHR11700">
    <property type="entry name" value="30S RIBOSOMAL PROTEIN S10 FAMILY MEMBER"/>
    <property type="match status" value="1"/>
</dbReference>
<dbReference type="Pfam" id="PF00338">
    <property type="entry name" value="Ribosomal_S10"/>
    <property type="match status" value="1"/>
</dbReference>
<dbReference type="PRINTS" id="PR00971">
    <property type="entry name" value="RIBOSOMALS10"/>
</dbReference>
<dbReference type="SMART" id="SM01403">
    <property type="entry name" value="Ribosomal_S10"/>
    <property type="match status" value="1"/>
</dbReference>
<dbReference type="SUPFAM" id="SSF54999">
    <property type="entry name" value="Ribosomal protein S10"/>
    <property type="match status" value="1"/>
</dbReference>
<dbReference type="PROSITE" id="PS00361">
    <property type="entry name" value="RIBOSOMAL_S10"/>
    <property type="match status" value="1"/>
</dbReference>
<reference key="1">
    <citation type="journal article" date="2008" name="Chem. Biol. Interact.">
        <title>Extending the Bacillus cereus group genomics to putative food-borne pathogens of different toxicity.</title>
        <authorList>
            <person name="Lapidus A."/>
            <person name="Goltsman E."/>
            <person name="Auger S."/>
            <person name="Galleron N."/>
            <person name="Segurens B."/>
            <person name="Dossat C."/>
            <person name="Land M.L."/>
            <person name="Broussolle V."/>
            <person name="Brillard J."/>
            <person name="Guinebretiere M.-H."/>
            <person name="Sanchis V."/>
            <person name="Nguen-the C."/>
            <person name="Lereclus D."/>
            <person name="Richardson P."/>
            <person name="Wincker P."/>
            <person name="Weissenbach J."/>
            <person name="Ehrlich S.D."/>
            <person name="Sorokin A."/>
        </authorList>
    </citation>
    <scope>NUCLEOTIDE SEQUENCE [LARGE SCALE GENOMIC DNA]</scope>
    <source>
        <strain>KBAB4</strain>
    </source>
</reference>
<organism>
    <name type="scientific">Bacillus mycoides (strain KBAB4)</name>
    <name type="common">Bacillus weihenstephanensis</name>
    <dbReference type="NCBI Taxonomy" id="315730"/>
    <lineage>
        <taxon>Bacteria</taxon>
        <taxon>Bacillati</taxon>
        <taxon>Bacillota</taxon>
        <taxon>Bacilli</taxon>
        <taxon>Bacillales</taxon>
        <taxon>Bacillaceae</taxon>
        <taxon>Bacillus</taxon>
        <taxon>Bacillus cereus group</taxon>
    </lineage>
</organism>
<name>RS10_BACMK</name>